<dbReference type="EC" id="1.7.1.13" evidence="1"/>
<dbReference type="EMBL" id="CP000267">
    <property type="protein sequence ID" value="ABD70087.1"/>
    <property type="molecule type" value="Genomic_DNA"/>
</dbReference>
<dbReference type="RefSeq" id="WP_011464655.1">
    <property type="nucleotide sequence ID" value="NC_007908.1"/>
</dbReference>
<dbReference type="SMR" id="Q21VW6"/>
<dbReference type="STRING" id="338969.Rfer_2370"/>
<dbReference type="KEGG" id="rfr:Rfer_2370"/>
<dbReference type="eggNOG" id="COG0780">
    <property type="taxonomic scope" value="Bacteria"/>
</dbReference>
<dbReference type="eggNOG" id="COG2904">
    <property type="taxonomic scope" value="Bacteria"/>
</dbReference>
<dbReference type="HOGENOM" id="CLU_054738_0_0_4"/>
<dbReference type="OrthoDB" id="9789995at2"/>
<dbReference type="UniPathway" id="UPA00392"/>
<dbReference type="Proteomes" id="UP000008332">
    <property type="component" value="Chromosome"/>
</dbReference>
<dbReference type="GO" id="GO:0005737">
    <property type="term" value="C:cytoplasm"/>
    <property type="evidence" value="ECO:0007669"/>
    <property type="project" value="UniProtKB-SubCell"/>
</dbReference>
<dbReference type="GO" id="GO:0033739">
    <property type="term" value="F:preQ1 synthase activity"/>
    <property type="evidence" value="ECO:0007669"/>
    <property type="project" value="UniProtKB-UniRule"/>
</dbReference>
<dbReference type="GO" id="GO:0008616">
    <property type="term" value="P:queuosine biosynthetic process"/>
    <property type="evidence" value="ECO:0007669"/>
    <property type="project" value="UniProtKB-UniRule"/>
</dbReference>
<dbReference type="GO" id="GO:0006400">
    <property type="term" value="P:tRNA modification"/>
    <property type="evidence" value="ECO:0007669"/>
    <property type="project" value="UniProtKB-UniRule"/>
</dbReference>
<dbReference type="Gene3D" id="3.30.1130.10">
    <property type="match status" value="2"/>
</dbReference>
<dbReference type="HAMAP" id="MF_00817">
    <property type="entry name" value="QueF_type2"/>
    <property type="match status" value="1"/>
</dbReference>
<dbReference type="InterPro" id="IPR043133">
    <property type="entry name" value="GTP-CH-I_C/QueF"/>
</dbReference>
<dbReference type="InterPro" id="IPR050084">
    <property type="entry name" value="NADPH_dep_7-cyano-7-deazaG_red"/>
</dbReference>
<dbReference type="InterPro" id="IPR029500">
    <property type="entry name" value="QueF"/>
</dbReference>
<dbReference type="InterPro" id="IPR029139">
    <property type="entry name" value="QueF_N"/>
</dbReference>
<dbReference type="InterPro" id="IPR016428">
    <property type="entry name" value="QueF_type2"/>
</dbReference>
<dbReference type="NCBIfam" id="TIGR03138">
    <property type="entry name" value="QueF"/>
    <property type="match status" value="1"/>
</dbReference>
<dbReference type="PANTHER" id="PTHR34354">
    <property type="entry name" value="NADPH-DEPENDENT 7-CYANO-7-DEAZAGUANINE REDUCTASE"/>
    <property type="match status" value="1"/>
</dbReference>
<dbReference type="PANTHER" id="PTHR34354:SF1">
    <property type="entry name" value="NADPH-DEPENDENT 7-CYANO-7-DEAZAGUANINE REDUCTASE"/>
    <property type="match status" value="1"/>
</dbReference>
<dbReference type="Pfam" id="PF14489">
    <property type="entry name" value="QueF"/>
    <property type="match status" value="1"/>
</dbReference>
<dbReference type="Pfam" id="PF14819">
    <property type="entry name" value="QueF_N"/>
    <property type="match status" value="1"/>
</dbReference>
<dbReference type="PIRSF" id="PIRSF004750">
    <property type="entry name" value="Nitrile_oxidored_YqcD_prd"/>
    <property type="match status" value="1"/>
</dbReference>
<dbReference type="SUPFAM" id="SSF55620">
    <property type="entry name" value="Tetrahydrobiopterin biosynthesis enzymes-like"/>
    <property type="match status" value="1"/>
</dbReference>
<protein>
    <recommendedName>
        <fullName evidence="1">NADPH-dependent 7-cyano-7-deazaguanine reductase</fullName>
        <ecNumber evidence="1">1.7.1.13</ecNumber>
    </recommendedName>
    <alternativeName>
        <fullName evidence="1">7-cyano-7-carbaguanine reductase</fullName>
    </alternativeName>
    <alternativeName>
        <fullName evidence="1">NADPH-dependent nitrile oxidoreductase</fullName>
    </alternativeName>
    <alternativeName>
        <fullName evidence="1">PreQ(0) reductase</fullName>
    </alternativeName>
</protein>
<keyword id="KW-0963">Cytoplasm</keyword>
<keyword id="KW-0521">NADP</keyword>
<keyword id="KW-0560">Oxidoreductase</keyword>
<keyword id="KW-0671">Queuosine biosynthesis</keyword>
<keyword id="KW-1185">Reference proteome</keyword>
<comment type="function">
    <text evidence="1">Catalyzes the NADPH-dependent reduction of 7-cyano-7-deazaguanine (preQ0) to 7-aminomethyl-7-deazaguanine (preQ1).</text>
</comment>
<comment type="catalytic activity">
    <reaction evidence="1">
        <text>7-aminomethyl-7-carbaguanine + 2 NADP(+) = 7-cyano-7-deazaguanine + 2 NADPH + 3 H(+)</text>
        <dbReference type="Rhea" id="RHEA:13409"/>
        <dbReference type="ChEBI" id="CHEBI:15378"/>
        <dbReference type="ChEBI" id="CHEBI:45075"/>
        <dbReference type="ChEBI" id="CHEBI:57783"/>
        <dbReference type="ChEBI" id="CHEBI:58349"/>
        <dbReference type="ChEBI" id="CHEBI:58703"/>
        <dbReference type="EC" id="1.7.1.13"/>
    </reaction>
</comment>
<comment type="pathway">
    <text evidence="1">tRNA modification; tRNA-queuosine biosynthesis.</text>
</comment>
<comment type="subunit">
    <text evidence="1">Homodimer.</text>
</comment>
<comment type="subcellular location">
    <subcellularLocation>
        <location evidence="1">Cytoplasm</location>
    </subcellularLocation>
</comment>
<comment type="similarity">
    <text evidence="1">Belongs to the GTP cyclohydrolase I family. QueF type 2 subfamily.</text>
</comment>
<feature type="chain" id="PRO_0000247716" description="NADPH-dependent 7-cyano-7-deazaguanine reductase">
    <location>
        <begin position="1"/>
        <end position="289"/>
    </location>
</feature>
<feature type="active site" description="Thioimide intermediate" evidence="1">
    <location>
        <position position="196"/>
    </location>
</feature>
<feature type="active site" description="Proton donor" evidence="1">
    <location>
        <position position="203"/>
    </location>
</feature>
<feature type="binding site" evidence="1">
    <location>
        <begin position="81"/>
        <end position="83"/>
    </location>
    <ligand>
        <name>substrate</name>
    </ligand>
</feature>
<feature type="binding site" evidence="1">
    <location>
        <begin position="83"/>
        <end position="84"/>
    </location>
    <ligand>
        <name>NADPH</name>
        <dbReference type="ChEBI" id="CHEBI:57783"/>
    </ligand>
</feature>
<feature type="binding site" evidence="1">
    <location>
        <begin position="235"/>
        <end position="236"/>
    </location>
    <ligand>
        <name>substrate</name>
    </ligand>
</feature>
<feature type="binding site" evidence="1">
    <location>
        <begin position="264"/>
        <end position="265"/>
    </location>
    <ligand>
        <name>NADPH</name>
        <dbReference type="ChEBI" id="CHEBI:57783"/>
    </ligand>
</feature>
<organism>
    <name type="scientific">Albidiferax ferrireducens (strain ATCC BAA-621 / DSM 15236 / T118)</name>
    <name type="common">Rhodoferax ferrireducens</name>
    <dbReference type="NCBI Taxonomy" id="338969"/>
    <lineage>
        <taxon>Bacteria</taxon>
        <taxon>Pseudomonadati</taxon>
        <taxon>Pseudomonadota</taxon>
        <taxon>Betaproteobacteria</taxon>
        <taxon>Burkholderiales</taxon>
        <taxon>Comamonadaceae</taxon>
        <taxon>Rhodoferax</taxon>
    </lineage>
</organism>
<sequence length="289" mass="32244">MNTPQNSPLGQATAYLDQYDASLLFPIARATKRAEIGVTGALPFLGADMWTAFELSWLNLRGKPQVALARFTVPCESPNIIESKSFKLYLNSFNNTRFADVDAVKARLRADLSEAVWRDAGKNVSPDAAAPPSIGVTLLLPELFDREPIYELDGLSLDRLDVECTHYTPAPDLLRVVPDEAPVSEVLVSNLLKSNCPVTGQPDWASVQISYSGAPIDQEGLLQYLVSFRNHNEFHEQCVERIFMDLWTRCKPVRLAVYARYTRRGGLDINPFRTSYAQALPANVRNARQ</sequence>
<accession>Q21VW6</accession>
<name>QUEF_ALBFT</name>
<gene>
    <name evidence="1" type="primary">queF</name>
    <name type="ordered locus">Rfer_2370</name>
</gene>
<proteinExistence type="inferred from homology"/>
<evidence type="ECO:0000255" key="1">
    <source>
        <dbReference type="HAMAP-Rule" id="MF_00817"/>
    </source>
</evidence>
<reference key="1">
    <citation type="submission" date="2006-02" db="EMBL/GenBank/DDBJ databases">
        <title>Complete sequence of chromosome of Rhodoferax ferrireducens DSM 15236.</title>
        <authorList>
            <person name="Copeland A."/>
            <person name="Lucas S."/>
            <person name="Lapidus A."/>
            <person name="Barry K."/>
            <person name="Detter J.C."/>
            <person name="Glavina del Rio T."/>
            <person name="Hammon N."/>
            <person name="Israni S."/>
            <person name="Pitluck S."/>
            <person name="Brettin T."/>
            <person name="Bruce D."/>
            <person name="Han C."/>
            <person name="Tapia R."/>
            <person name="Gilna P."/>
            <person name="Kiss H."/>
            <person name="Schmutz J."/>
            <person name="Larimer F."/>
            <person name="Land M."/>
            <person name="Kyrpides N."/>
            <person name="Ivanova N."/>
            <person name="Richardson P."/>
        </authorList>
    </citation>
    <scope>NUCLEOTIDE SEQUENCE [LARGE SCALE GENOMIC DNA]</scope>
    <source>
        <strain>ATCC BAA-621 / DSM 15236 / T118</strain>
    </source>
</reference>